<evidence type="ECO:0000250" key="1"/>
<evidence type="ECO:0000255" key="2"/>
<evidence type="ECO:0000255" key="3">
    <source>
        <dbReference type="PROSITE-ProRule" id="PRU00541"/>
    </source>
</evidence>
<evidence type="ECO:0000255" key="4">
    <source>
        <dbReference type="PROSITE-ProRule" id="PRU00542"/>
    </source>
</evidence>
<evidence type="ECO:0000256" key="5">
    <source>
        <dbReference type="SAM" id="MobiDB-lite"/>
    </source>
</evidence>
<evidence type="ECO:0000305" key="6"/>
<sequence>MTSKVDTGGWNKLENKLSDSTLNTINRLGFKSMSPVQSAVIPLFMSNKDVLVEACTGSGKTLAFVIPIIEKILKRETNLKKTDIASIIISPTRELAIQIQQVLLEFLNDLNRIDDQNDLENIKTLEDELLEEQEEEENEKEEEEIEKKKKKKKIEISSLLLIGGTDIYQDLVNYKNYGGNILIGTPGRTDEFLTRVVRNDQQFKFKEFEMLILDEADRLLDMGFHLPINSILLKLPKQRRTGLFSATQTSEVKELARTGMRNPFKVSVSVKHIETHEDQSIPTTLDNRYMIVPVEERLNQLVHFLLNHIDKNKIIIYFLTCSTVDYFFKILQSVKVLSGKPFFSLHGKAPHSQRIKVFDSFSQATNGCLLSTDLAARGLDIPNVDWVLQYDSPQDPKAFVHRIGRTARMGRDGNALIFLSPEEDSYIEFLKIKKVPLVEMVKAENVTNVLPEIKKISFNDREIMEKGVIAMVSHVRGYKEHLCPYIFVFHRLNIGLLATGFGLLYLPRMPEIRDKTLIAEWTSGYTKDQILKIAYKEKKKEKQRLEKVNKIKLKKEKDAKERQDAINEKKRKLEQQEADKLLQKQQPKQSSIEIQLKKQEEKKKQEQESINEILHETQAFKKARKSKQQKKDKSSRFSDLMGSDTEQNNNEDEEDEEEEDEDN</sequence>
<keyword id="KW-0067">ATP-binding</keyword>
<keyword id="KW-0175">Coiled coil</keyword>
<keyword id="KW-0347">Helicase</keyword>
<keyword id="KW-0378">Hydrolase</keyword>
<keyword id="KW-0547">Nucleotide-binding</keyword>
<keyword id="KW-0539">Nucleus</keyword>
<keyword id="KW-1185">Reference proteome</keyword>
<keyword id="KW-0690">Ribosome biogenesis</keyword>
<keyword id="KW-0694">RNA-binding</keyword>
<keyword id="KW-0698">rRNA processing</keyword>
<comment type="function">
    <text evidence="1">Probable ATP-binding RNA helicase which may be involved in ribosome biogenesis.</text>
</comment>
<comment type="catalytic activity">
    <reaction>
        <text>ATP + H2O = ADP + phosphate + H(+)</text>
        <dbReference type="Rhea" id="RHEA:13065"/>
        <dbReference type="ChEBI" id="CHEBI:15377"/>
        <dbReference type="ChEBI" id="CHEBI:15378"/>
        <dbReference type="ChEBI" id="CHEBI:30616"/>
        <dbReference type="ChEBI" id="CHEBI:43474"/>
        <dbReference type="ChEBI" id="CHEBI:456216"/>
        <dbReference type="EC" id="3.6.4.13"/>
    </reaction>
</comment>
<comment type="subcellular location">
    <subcellularLocation>
        <location evidence="1">Nucleus</location>
        <location evidence="1">Nucleolus</location>
    </subcellularLocation>
</comment>
<comment type="domain">
    <text>The Q motif is unique to and characteristic of the DEAD box family of RNA helicases and controls ATP binding and hydrolysis.</text>
</comment>
<comment type="similarity">
    <text evidence="6">Belongs to the DEAD box helicase family. DDX55/SPB4 subfamily.</text>
</comment>
<accession>Q54EC2</accession>
<dbReference type="EC" id="3.6.4.13"/>
<dbReference type="EMBL" id="AAFI02000177">
    <property type="protein sequence ID" value="EAL61778.1"/>
    <property type="molecule type" value="Genomic_DNA"/>
</dbReference>
<dbReference type="RefSeq" id="XP_635318.1">
    <property type="nucleotide sequence ID" value="XM_630226.1"/>
</dbReference>
<dbReference type="SMR" id="Q54EC2"/>
<dbReference type="FunCoup" id="Q54EC2">
    <property type="interactions" value="1108"/>
</dbReference>
<dbReference type="STRING" id="44689.Q54EC2"/>
<dbReference type="PaxDb" id="44689-DDB0234215"/>
<dbReference type="EnsemblProtists" id="EAL61778">
    <property type="protein sequence ID" value="EAL61778"/>
    <property type="gene ID" value="DDB_G0291588"/>
</dbReference>
<dbReference type="GeneID" id="8628262"/>
<dbReference type="KEGG" id="ddi:DDB_G0291588"/>
<dbReference type="dictyBase" id="DDB_G0291588">
    <property type="gene designation" value="ddx55"/>
</dbReference>
<dbReference type="VEuPathDB" id="AmoebaDB:DDB_G0291588"/>
<dbReference type="eggNOG" id="KOG0345">
    <property type="taxonomic scope" value="Eukaryota"/>
</dbReference>
<dbReference type="HOGENOM" id="CLU_003041_26_4_1"/>
<dbReference type="InParanoid" id="Q54EC2"/>
<dbReference type="OMA" id="IQFEDHM"/>
<dbReference type="PhylomeDB" id="Q54EC2"/>
<dbReference type="PRO" id="PR:Q54EC2"/>
<dbReference type="Proteomes" id="UP000002195">
    <property type="component" value="Chromosome 6"/>
</dbReference>
<dbReference type="GO" id="GO:0005730">
    <property type="term" value="C:nucleolus"/>
    <property type="evidence" value="ECO:0000318"/>
    <property type="project" value="GO_Central"/>
</dbReference>
<dbReference type="GO" id="GO:0005524">
    <property type="term" value="F:ATP binding"/>
    <property type="evidence" value="ECO:0007669"/>
    <property type="project" value="UniProtKB-KW"/>
</dbReference>
<dbReference type="GO" id="GO:0016887">
    <property type="term" value="F:ATP hydrolysis activity"/>
    <property type="evidence" value="ECO:0007669"/>
    <property type="project" value="RHEA"/>
</dbReference>
<dbReference type="GO" id="GO:0003723">
    <property type="term" value="F:RNA binding"/>
    <property type="evidence" value="ECO:0007669"/>
    <property type="project" value="UniProtKB-KW"/>
</dbReference>
<dbReference type="GO" id="GO:0003724">
    <property type="term" value="F:RNA helicase activity"/>
    <property type="evidence" value="ECO:0007669"/>
    <property type="project" value="UniProtKB-EC"/>
</dbReference>
<dbReference type="GO" id="GO:0006364">
    <property type="term" value="P:rRNA processing"/>
    <property type="evidence" value="ECO:0007669"/>
    <property type="project" value="UniProtKB-KW"/>
</dbReference>
<dbReference type="CDD" id="cd17960">
    <property type="entry name" value="DEADc_DDX55"/>
    <property type="match status" value="1"/>
</dbReference>
<dbReference type="CDD" id="cd18787">
    <property type="entry name" value="SF2_C_DEAD"/>
    <property type="match status" value="1"/>
</dbReference>
<dbReference type="Gene3D" id="3.40.50.300">
    <property type="entry name" value="P-loop containing nucleotide triphosphate hydrolases"/>
    <property type="match status" value="2"/>
</dbReference>
<dbReference type="InterPro" id="IPR011545">
    <property type="entry name" value="DEAD/DEAH_box_helicase_dom"/>
</dbReference>
<dbReference type="InterPro" id="IPR014001">
    <property type="entry name" value="Helicase_ATP-bd"/>
</dbReference>
<dbReference type="InterPro" id="IPR001650">
    <property type="entry name" value="Helicase_C-like"/>
</dbReference>
<dbReference type="InterPro" id="IPR027417">
    <property type="entry name" value="P-loop_NTPase"/>
</dbReference>
<dbReference type="InterPro" id="IPR000629">
    <property type="entry name" value="RNA-helicase_DEAD-box_CS"/>
</dbReference>
<dbReference type="InterPro" id="IPR025313">
    <property type="entry name" value="SPB4-like_CTE"/>
</dbReference>
<dbReference type="PANTHER" id="PTHR24031">
    <property type="entry name" value="RNA HELICASE"/>
    <property type="match status" value="1"/>
</dbReference>
<dbReference type="Pfam" id="PF13959">
    <property type="entry name" value="CTE_SPB4"/>
    <property type="match status" value="1"/>
</dbReference>
<dbReference type="Pfam" id="PF00270">
    <property type="entry name" value="DEAD"/>
    <property type="match status" value="2"/>
</dbReference>
<dbReference type="Pfam" id="PF00271">
    <property type="entry name" value="Helicase_C"/>
    <property type="match status" value="1"/>
</dbReference>
<dbReference type="SMART" id="SM00487">
    <property type="entry name" value="DEXDc"/>
    <property type="match status" value="1"/>
</dbReference>
<dbReference type="SMART" id="SM01178">
    <property type="entry name" value="DUF4217"/>
    <property type="match status" value="1"/>
</dbReference>
<dbReference type="SMART" id="SM00490">
    <property type="entry name" value="HELICc"/>
    <property type="match status" value="1"/>
</dbReference>
<dbReference type="SUPFAM" id="SSF52540">
    <property type="entry name" value="P-loop containing nucleoside triphosphate hydrolases"/>
    <property type="match status" value="2"/>
</dbReference>
<dbReference type="PROSITE" id="PS00039">
    <property type="entry name" value="DEAD_ATP_HELICASE"/>
    <property type="match status" value="1"/>
</dbReference>
<dbReference type="PROSITE" id="PS51192">
    <property type="entry name" value="HELICASE_ATP_BIND_1"/>
    <property type="match status" value="1"/>
</dbReference>
<dbReference type="PROSITE" id="PS51194">
    <property type="entry name" value="HELICASE_CTER"/>
    <property type="match status" value="1"/>
</dbReference>
<dbReference type="PROSITE" id="PS51195">
    <property type="entry name" value="Q_MOTIF"/>
    <property type="match status" value="1"/>
</dbReference>
<protein>
    <recommendedName>
        <fullName>Probable ATP-dependent RNA helicase ddx55</fullName>
        <ecNumber>3.6.4.13</ecNumber>
    </recommendedName>
    <alternativeName>
        <fullName>DEAD box protein 55</fullName>
    </alternativeName>
</protein>
<gene>
    <name type="primary">ddx55</name>
    <name type="ORF">DDB_G0291588</name>
</gene>
<name>DDX55_DICDI</name>
<reference key="1">
    <citation type="journal article" date="2005" name="Nature">
        <title>The genome of the social amoeba Dictyostelium discoideum.</title>
        <authorList>
            <person name="Eichinger L."/>
            <person name="Pachebat J.A."/>
            <person name="Gloeckner G."/>
            <person name="Rajandream M.A."/>
            <person name="Sucgang R."/>
            <person name="Berriman M."/>
            <person name="Song J."/>
            <person name="Olsen R."/>
            <person name="Szafranski K."/>
            <person name="Xu Q."/>
            <person name="Tunggal B."/>
            <person name="Kummerfeld S."/>
            <person name="Madera M."/>
            <person name="Konfortov B.A."/>
            <person name="Rivero F."/>
            <person name="Bankier A.T."/>
            <person name="Lehmann R."/>
            <person name="Hamlin N."/>
            <person name="Davies R."/>
            <person name="Gaudet P."/>
            <person name="Fey P."/>
            <person name="Pilcher K."/>
            <person name="Chen G."/>
            <person name="Saunders D."/>
            <person name="Sodergren E.J."/>
            <person name="Davis P."/>
            <person name="Kerhornou A."/>
            <person name="Nie X."/>
            <person name="Hall N."/>
            <person name="Anjard C."/>
            <person name="Hemphill L."/>
            <person name="Bason N."/>
            <person name="Farbrother P."/>
            <person name="Desany B."/>
            <person name="Just E."/>
            <person name="Morio T."/>
            <person name="Rost R."/>
            <person name="Churcher C.M."/>
            <person name="Cooper J."/>
            <person name="Haydock S."/>
            <person name="van Driessche N."/>
            <person name="Cronin A."/>
            <person name="Goodhead I."/>
            <person name="Muzny D.M."/>
            <person name="Mourier T."/>
            <person name="Pain A."/>
            <person name="Lu M."/>
            <person name="Harper D."/>
            <person name="Lindsay R."/>
            <person name="Hauser H."/>
            <person name="James K.D."/>
            <person name="Quiles M."/>
            <person name="Madan Babu M."/>
            <person name="Saito T."/>
            <person name="Buchrieser C."/>
            <person name="Wardroper A."/>
            <person name="Felder M."/>
            <person name="Thangavelu M."/>
            <person name="Johnson D."/>
            <person name="Knights A."/>
            <person name="Loulseged H."/>
            <person name="Mungall K.L."/>
            <person name="Oliver K."/>
            <person name="Price C."/>
            <person name="Quail M.A."/>
            <person name="Urushihara H."/>
            <person name="Hernandez J."/>
            <person name="Rabbinowitsch E."/>
            <person name="Steffen D."/>
            <person name="Sanders M."/>
            <person name="Ma J."/>
            <person name="Kohara Y."/>
            <person name="Sharp S."/>
            <person name="Simmonds M.N."/>
            <person name="Spiegler S."/>
            <person name="Tivey A."/>
            <person name="Sugano S."/>
            <person name="White B."/>
            <person name="Walker D."/>
            <person name="Woodward J.R."/>
            <person name="Winckler T."/>
            <person name="Tanaka Y."/>
            <person name="Shaulsky G."/>
            <person name="Schleicher M."/>
            <person name="Weinstock G.M."/>
            <person name="Rosenthal A."/>
            <person name="Cox E.C."/>
            <person name="Chisholm R.L."/>
            <person name="Gibbs R.A."/>
            <person name="Loomis W.F."/>
            <person name="Platzer M."/>
            <person name="Kay R.R."/>
            <person name="Williams J.G."/>
            <person name="Dear P.H."/>
            <person name="Noegel A.A."/>
            <person name="Barrell B.G."/>
            <person name="Kuspa A."/>
        </authorList>
    </citation>
    <scope>NUCLEOTIDE SEQUENCE [LARGE SCALE GENOMIC DNA]</scope>
    <source>
        <strain>AX4</strain>
    </source>
</reference>
<proteinExistence type="inferred from homology"/>
<feature type="chain" id="PRO_0000327416" description="Probable ATP-dependent RNA helicase ddx55">
    <location>
        <begin position="1"/>
        <end position="663"/>
    </location>
</feature>
<feature type="domain" description="Helicase ATP-binding" evidence="3">
    <location>
        <begin position="41"/>
        <end position="266"/>
    </location>
</feature>
<feature type="domain" description="Helicase C-terminal" evidence="4">
    <location>
        <begin position="297"/>
        <end position="457"/>
    </location>
</feature>
<feature type="region of interest" description="Disordered" evidence="5">
    <location>
        <begin position="556"/>
        <end position="663"/>
    </location>
</feature>
<feature type="coiled-coil region" evidence="2">
    <location>
        <begin position="531"/>
        <end position="658"/>
    </location>
</feature>
<feature type="short sequence motif" description="Q motif">
    <location>
        <begin position="10"/>
        <end position="38"/>
    </location>
</feature>
<feature type="short sequence motif" description="DEAD box">
    <location>
        <begin position="214"/>
        <end position="217"/>
    </location>
</feature>
<feature type="compositionally biased region" description="Basic and acidic residues" evidence="5">
    <location>
        <begin position="556"/>
        <end position="582"/>
    </location>
</feature>
<feature type="compositionally biased region" description="Low complexity" evidence="5">
    <location>
        <begin position="583"/>
        <end position="594"/>
    </location>
</feature>
<feature type="compositionally biased region" description="Basic and acidic residues" evidence="5">
    <location>
        <begin position="595"/>
        <end position="619"/>
    </location>
</feature>
<feature type="compositionally biased region" description="Acidic residues" evidence="5">
    <location>
        <begin position="649"/>
        <end position="663"/>
    </location>
</feature>
<feature type="binding site" evidence="3">
    <location>
        <begin position="54"/>
        <end position="61"/>
    </location>
    <ligand>
        <name>ATP</name>
        <dbReference type="ChEBI" id="CHEBI:30616"/>
    </ligand>
</feature>
<organism>
    <name type="scientific">Dictyostelium discoideum</name>
    <name type="common">Social amoeba</name>
    <dbReference type="NCBI Taxonomy" id="44689"/>
    <lineage>
        <taxon>Eukaryota</taxon>
        <taxon>Amoebozoa</taxon>
        <taxon>Evosea</taxon>
        <taxon>Eumycetozoa</taxon>
        <taxon>Dictyostelia</taxon>
        <taxon>Dictyosteliales</taxon>
        <taxon>Dictyosteliaceae</taxon>
        <taxon>Dictyostelium</taxon>
    </lineage>
</organism>